<protein>
    <recommendedName>
        <fullName evidence="1">Acylglycerol kinase, mitochondrial</fullName>
        <ecNumber evidence="1">2.7.1.107</ecNumber>
        <ecNumber evidence="2">2.7.1.138</ecNumber>
        <ecNumber evidence="1">2.7.1.94</ecNumber>
    </recommendedName>
    <alternativeName>
        <fullName evidence="1">Multiple substrate lipid kinase</fullName>
        <shortName evidence="1">MuLK</shortName>
        <shortName evidence="1">Multi-substrate lipid kinase</shortName>
    </alternativeName>
</protein>
<name>AGK_XENLA</name>
<organism>
    <name type="scientific">Xenopus laevis</name>
    <name type="common">African clawed frog</name>
    <dbReference type="NCBI Taxonomy" id="8355"/>
    <lineage>
        <taxon>Eukaryota</taxon>
        <taxon>Metazoa</taxon>
        <taxon>Chordata</taxon>
        <taxon>Craniata</taxon>
        <taxon>Vertebrata</taxon>
        <taxon>Euteleostomi</taxon>
        <taxon>Amphibia</taxon>
        <taxon>Batrachia</taxon>
        <taxon>Anura</taxon>
        <taxon>Pipoidea</taxon>
        <taxon>Pipidae</taxon>
        <taxon>Xenopodinae</taxon>
        <taxon>Xenopus</taxon>
        <taxon>Xenopus</taxon>
    </lineage>
</organism>
<sequence>MARVVRIFKTLRNHWKKSTVGFCLLAYGSHWLYGKHCDNLLRRAACEEAQVFGNHQILPHSAIKKATVFLNPAACKGKARTLFEKNAAPVLHLAGIDITVVKTDYEGQAKKLLELMEKTDLIIVAGGDGTVQEVITGLLRRDDEASFSKIPIGFIPLGGTNTLSHTLYPERENKVEQITEATLSILKGETVPLDVLQIKGEQDQPVFAVQGIRWGSYRDASVKVSKYWYLGPLKARAAHLFSALKEWPQQHQASISYLGPAERPPEEPEQKPSRPPLYVRIYRRLALYWSPPKVEVPVEPTPEPWEEAQLSAVELSITTQNHQPDLLRTLDSMSIHIEPDTISKGKFIQLGAQKMTDPLLHPEDSQVLLASRCSLHLPQGTEGHFSIDSEEYEAMSVDVTLLPRKLHFLCHPTRKQELLQSPTATAQS</sequence>
<evidence type="ECO:0000250" key="1">
    <source>
        <dbReference type="UniProtKB" id="Q53H12"/>
    </source>
</evidence>
<evidence type="ECO:0000250" key="2">
    <source>
        <dbReference type="UniProtKB" id="Q9ESW4"/>
    </source>
</evidence>
<evidence type="ECO:0000255" key="3">
    <source>
        <dbReference type="PROSITE-ProRule" id="PRU00783"/>
    </source>
</evidence>
<evidence type="ECO:0000305" key="4"/>
<comment type="function">
    <text evidence="1 2">Lipid kinase that can phosphorylate both monoacylglycerol and diacylglycerol to form lysophosphatidic acid (LPA) and phosphatidic acid (PA), respectively (By similarity). Phosphorylates ceramide but not sphingosine (By similarity). Phosphorylates 1,2-dioleoylglycerol more rapidly than 2,3-dioleoylglycerol (By similarity). Independently of its lipid kinase activity, acts as a component of the TIM22 complex (By similarity). The TIM22 complex mediates the import and insertion of multi-pass transmembrane proteins into the mitochondrial inner membrane by forming a twin-pore translocase that uses the membrane potential as the external driving force (By similarity).</text>
</comment>
<comment type="catalytic activity">
    <reaction evidence="1">
        <text>a monoacylglycerol + ATP = a monoacyl-sn-glycero-3-phosphate + ADP + H(+)</text>
        <dbReference type="Rhea" id="RHEA:19293"/>
        <dbReference type="ChEBI" id="CHEBI:15378"/>
        <dbReference type="ChEBI" id="CHEBI:17408"/>
        <dbReference type="ChEBI" id="CHEBI:30616"/>
        <dbReference type="ChEBI" id="CHEBI:77589"/>
        <dbReference type="ChEBI" id="CHEBI:456216"/>
        <dbReference type="EC" id="2.7.1.94"/>
    </reaction>
    <physiologicalReaction direction="left-to-right" evidence="1">
        <dbReference type="Rhea" id="RHEA:19294"/>
    </physiologicalReaction>
</comment>
<comment type="catalytic activity">
    <reaction evidence="1">
        <text>a 1,2-diacyl-sn-glycerol + ATP = a 1,2-diacyl-sn-glycero-3-phosphate + ADP + H(+)</text>
        <dbReference type="Rhea" id="RHEA:10272"/>
        <dbReference type="ChEBI" id="CHEBI:15378"/>
        <dbReference type="ChEBI" id="CHEBI:17815"/>
        <dbReference type="ChEBI" id="CHEBI:30616"/>
        <dbReference type="ChEBI" id="CHEBI:58608"/>
        <dbReference type="ChEBI" id="CHEBI:456216"/>
        <dbReference type="EC" id="2.7.1.107"/>
    </reaction>
    <physiologicalReaction direction="left-to-right" evidence="1">
        <dbReference type="Rhea" id="RHEA:10273"/>
    </physiologicalReaction>
</comment>
<comment type="catalytic activity">
    <reaction evidence="2">
        <text>an N-acylsphing-4-enine + ATP = an N-acylsphing-4-enine 1-phosphate + ADP + H(+)</text>
        <dbReference type="Rhea" id="RHEA:17929"/>
        <dbReference type="ChEBI" id="CHEBI:15378"/>
        <dbReference type="ChEBI" id="CHEBI:30616"/>
        <dbReference type="ChEBI" id="CHEBI:52639"/>
        <dbReference type="ChEBI" id="CHEBI:57674"/>
        <dbReference type="ChEBI" id="CHEBI:456216"/>
        <dbReference type="EC" id="2.7.1.138"/>
    </reaction>
    <physiologicalReaction direction="left-to-right" evidence="2">
        <dbReference type="Rhea" id="RHEA:17930"/>
    </physiologicalReaction>
</comment>
<comment type="catalytic activity">
    <reaction evidence="1">
        <text>1-(9Z-octadecenoyl)-sn-glycerol + ATP = 1-(9Z-octadecenoyl)-sn-glycero-3-phosphate + ADP + H(+)</text>
        <dbReference type="Rhea" id="RHEA:41079"/>
        <dbReference type="ChEBI" id="CHEBI:15378"/>
        <dbReference type="ChEBI" id="CHEBI:30616"/>
        <dbReference type="ChEBI" id="CHEBI:74544"/>
        <dbReference type="ChEBI" id="CHEBI:75757"/>
        <dbReference type="ChEBI" id="CHEBI:456216"/>
    </reaction>
    <physiologicalReaction direction="left-to-right" evidence="1">
        <dbReference type="Rhea" id="RHEA:41080"/>
    </physiologicalReaction>
</comment>
<comment type="catalytic activity">
    <reaction evidence="1">
        <text>1,2-di-(9Z-octadecenoyl)-sn-glycerol + ATP = 1,2-di-(9Z-octadecenoyl)-sn-glycero-3-phosphate + ADP + H(+)</text>
        <dbReference type="Rhea" id="RHEA:40327"/>
        <dbReference type="ChEBI" id="CHEBI:15378"/>
        <dbReference type="ChEBI" id="CHEBI:30616"/>
        <dbReference type="ChEBI" id="CHEBI:52333"/>
        <dbReference type="ChEBI" id="CHEBI:74546"/>
        <dbReference type="ChEBI" id="CHEBI:456216"/>
    </reaction>
    <physiologicalReaction direction="left-to-right" evidence="1">
        <dbReference type="Rhea" id="RHEA:40328"/>
    </physiologicalReaction>
</comment>
<comment type="catalytic activity">
    <reaction evidence="1">
        <text>a 1-acyl-sn-glycerol + ATP = a 1-acyl-sn-glycero-3-phosphate + ADP + H(+)</text>
        <dbReference type="Rhea" id="RHEA:33747"/>
        <dbReference type="ChEBI" id="CHEBI:15378"/>
        <dbReference type="ChEBI" id="CHEBI:30616"/>
        <dbReference type="ChEBI" id="CHEBI:57970"/>
        <dbReference type="ChEBI" id="CHEBI:64683"/>
        <dbReference type="ChEBI" id="CHEBI:456216"/>
    </reaction>
    <physiologicalReaction direction="left-to-right" evidence="1">
        <dbReference type="Rhea" id="RHEA:33748"/>
    </physiologicalReaction>
</comment>
<comment type="catalytic activity">
    <reaction evidence="1">
        <text>1-hexadecanoyl-sn-glycerol + ATP = 1-hexadecanoyl-sn-glycero-3-phosphate + ADP + H(+)</text>
        <dbReference type="Rhea" id="RHEA:43308"/>
        <dbReference type="ChEBI" id="CHEBI:15378"/>
        <dbReference type="ChEBI" id="CHEBI:30616"/>
        <dbReference type="ChEBI" id="CHEBI:57518"/>
        <dbReference type="ChEBI" id="CHEBI:75542"/>
        <dbReference type="ChEBI" id="CHEBI:456216"/>
    </reaction>
    <physiologicalReaction direction="left-to-right" evidence="1">
        <dbReference type="Rhea" id="RHEA:43309"/>
    </physiologicalReaction>
</comment>
<comment type="catalytic activity">
    <reaction evidence="1">
        <text>a 2-acylglycerol + ATP = a 2-acyl-sn-glycerol 3-phosphate + ADP + H(+)</text>
        <dbReference type="Rhea" id="RHEA:39847"/>
        <dbReference type="ChEBI" id="CHEBI:15378"/>
        <dbReference type="ChEBI" id="CHEBI:17389"/>
        <dbReference type="ChEBI" id="CHEBI:30616"/>
        <dbReference type="ChEBI" id="CHEBI:64982"/>
        <dbReference type="ChEBI" id="CHEBI:456216"/>
    </reaction>
    <physiologicalReaction direction="left-to-right" evidence="1">
        <dbReference type="Rhea" id="RHEA:39848"/>
    </physiologicalReaction>
</comment>
<comment type="catalytic activity">
    <reaction evidence="1">
        <text>2-(5Z,8Z,11Z,14Z-eicosatetraenoyl)-glycerol + ATP = 2-(5Z,8Z,11Z,14Z-eicosatetraenoyl)-sn-glycero-3-phosphate + ADP + H(+)</text>
        <dbReference type="Rhea" id="RHEA:43316"/>
        <dbReference type="ChEBI" id="CHEBI:15378"/>
        <dbReference type="ChEBI" id="CHEBI:30616"/>
        <dbReference type="ChEBI" id="CHEBI:52392"/>
        <dbReference type="ChEBI" id="CHEBI:78209"/>
        <dbReference type="ChEBI" id="CHEBI:456216"/>
    </reaction>
    <physiologicalReaction direction="left-to-right" evidence="1">
        <dbReference type="Rhea" id="RHEA:43317"/>
    </physiologicalReaction>
</comment>
<comment type="catalytic activity">
    <reaction evidence="2">
        <text>1-(5Z,8Z,11Z,14Z-eicosatetraenoyl)-sn-glycerol + ATP = 1-(5Z,8Z,11Z,14Z-eicosatetraenoyl)-sn-glycero-3-phosphate + ADP + H(+)</text>
        <dbReference type="Rhea" id="RHEA:43328"/>
        <dbReference type="ChEBI" id="CHEBI:15378"/>
        <dbReference type="ChEBI" id="CHEBI:30616"/>
        <dbReference type="ChEBI" id="CHEBI:34071"/>
        <dbReference type="ChEBI" id="CHEBI:74938"/>
        <dbReference type="ChEBI" id="CHEBI:456216"/>
    </reaction>
    <physiologicalReaction direction="left-to-right" evidence="2">
        <dbReference type="Rhea" id="RHEA:43329"/>
    </physiologicalReaction>
</comment>
<comment type="catalytic activity">
    <reaction evidence="1">
        <text>N-(hexanoyl)sphing-4-enine + ATP = N-hexanoylsphing-4-enine 1-phosphate + ADP + H(+)</text>
        <dbReference type="Rhea" id="RHEA:43312"/>
        <dbReference type="ChEBI" id="CHEBI:15378"/>
        <dbReference type="ChEBI" id="CHEBI:30616"/>
        <dbReference type="ChEBI" id="CHEBI:63867"/>
        <dbReference type="ChEBI" id="CHEBI:82959"/>
        <dbReference type="ChEBI" id="CHEBI:456216"/>
    </reaction>
    <physiologicalReaction direction="left-to-right" evidence="1">
        <dbReference type="Rhea" id="RHEA:43313"/>
    </physiologicalReaction>
</comment>
<comment type="cofactor">
    <cofactor evidence="1">
        <name>Mg(2+)</name>
        <dbReference type="ChEBI" id="CHEBI:18420"/>
    </cofactor>
</comment>
<comment type="pathway">
    <text evidence="1">Lipid metabolism; glycerolipid metabolism.</text>
</comment>
<comment type="subunit">
    <text evidence="1">Component of the TIM22 complex.</text>
</comment>
<comment type="subcellular location">
    <subcellularLocation>
        <location evidence="1">Mitochondrion inner membrane</location>
        <topology evidence="1">Peripheral membrane protein</topology>
    </subcellularLocation>
    <subcellularLocation>
        <location evidence="1">Mitochondrion intermembrane space</location>
    </subcellularLocation>
    <text evidence="1">Localizes in the mitochondrion intermembrane space, where it associates with the inner membrane. It is unclear whether the N-terminal hydrophobic region forms a transmembrane region or associates with the membrane without crossing it.</text>
</comment>
<comment type="similarity">
    <text evidence="4">Belongs to the AGK family.</text>
</comment>
<proteinExistence type="evidence at transcript level"/>
<dbReference type="EC" id="2.7.1.107" evidence="1"/>
<dbReference type="EC" id="2.7.1.138" evidence="2"/>
<dbReference type="EC" id="2.7.1.94" evidence="1"/>
<dbReference type="EMBL" id="BC043761">
    <property type="protein sequence ID" value="AAH43761.1"/>
    <property type="molecule type" value="mRNA"/>
</dbReference>
<dbReference type="RefSeq" id="NP_001079476.1">
    <property type="nucleotide sequence ID" value="NM_001086007.1"/>
</dbReference>
<dbReference type="SMR" id="Q7ZYJ3"/>
<dbReference type="DNASU" id="379163"/>
<dbReference type="GeneID" id="379163"/>
<dbReference type="KEGG" id="xla:379163"/>
<dbReference type="AGR" id="Xenbase:XB-GENE-979728"/>
<dbReference type="CTD" id="379163"/>
<dbReference type="Xenbase" id="XB-GENE-979728">
    <property type="gene designation" value="agk.S"/>
</dbReference>
<dbReference type="OrthoDB" id="9979394at2759"/>
<dbReference type="BRENDA" id="2.7.1.107">
    <property type="organism ID" value="6725"/>
</dbReference>
<dbReference type="UniPathway" id="UPA00230"/>
<dbReference type="Proteomes" id="UP000186698">
    <property type="component" value="Chromosome 3S"/>
</dbReference>
<dbReference type="Bgee" id="379163">
    <property type="expression patterns" value="Expressed in blastula and 19 other cell types or tissues"/>
</dbReference>
<dbReference type="GO" id="GO:0005737">
    <property type="term" value="C:cytoplasm"/>
    <property type="evidence" value="ECO:0000318"/>
    <property type="project" value="GO_Central"/>
</dbReference>
<dbReference type="GO" id="GO:0016020">
    <property type="term" value="C:membrane"/>
    <property type="evidence" value="ECO:0000318"/>
    <property type="project" value="GO_Central"/>
</dbReference>
<dbReference type="GO" id="GO:0005743">
    <property type="term" value="C:mitochondrial inner membrane"/>
    <property type="evidence" value="ECO:0000250"/>
    <property type="project" value="UniProtKB"/>
</dbReference>
<dbReference type="GO" id="GO:0005758">
    <property type="term" value="C:mitochondrial intermembrane space"/>
    <property type="evidence" value="ECO:0000250"/>
    <property type="project" value="UniProtKB"/>
</dbReference>
<dbReference type="GO" id="GO:0031966">
    <property type="term" value="C:mitochondrial membrane"/>
    <property type="evidence" value="ECO:0000250"/>
    <property type="project" value="UniProtKB"/>
</dbReference>
<dbReference type="GO" id="GO:0005739">
    <property type="term" value="C:mitochondrion"/>
    <property type="evidence" value="ECO:0000318"/>
    <property type="project" value="GO_Central"/>
</dbReference>
<dbReference type="GO" id="GO:0042721">
    <property type="term" value="C:TIM22 mitochondrial import inner membrane insertion complex"/>
    <property type="evidence" value="ECO:0000250"/>
    <property type="project" value="UniProtKB"/>
</dbReference>
<dbReference type="GO" id="GO:0047620">
    <property type="term" value="F:acylglycerol kinase activity"/>
    <property type="evidence" value="ECO:0000250"/>
    <property type="project" value="UniProtKB"/>
</dbReference>
<dbReference type="GO" id="GO:0005524">
    <property type="term" value="F:ATP binding"/>
    <property type="evidence" value="ECO:0007669"/>
    <property type="project" value="UniProtKB-KW"/>
</dbReference>
<dbReference type="GO" id="GO:0004143">
    <property type="term" value="F:ATP-dependent diacylglycerol kinase activity"/>
    <property type="evidence" value="ECO:0000250"/>
    <property type="project" value="UniProtKB"/>
</dbReference>
<dbReference type="GO" id="GO:0001729">
    <property type="term" value="F:ceramide kinase activity"/>
    <property type="evidence" value="ECO:0000318"/>
    <property type="project" value="GO_Central"/>
</dbReference>
<dbReference type="GO" id="GO:0017050">
    <property type="term" value="F:D-erythro-sphingosine kinase activity"/>
    <property type="evidence" value="ECO:0000318"/>
    <property type="project" value="GO_Central"/>
</dbReference>
<dbReference type="GO" id="GO:0046513">
    <property type="term" value="P:ceramide biosynthetic process"/>
    <property type="evidence" value="ECO:0000318"/>
    <property type="project" value="GO_Central"/>
</dbReference>
<dbReference type="GO" id="GO:0046486">
    <property type="term" value="P:glycerolipid metabolic process"/>
    <property type="evidence" value="ECO:0007669"/>
    <property type="project" value="UniProtKB-UniPathway"/>
</dbReference>
<dbReference type="GO" id="GO:0045039">
    <property type="term" value="P:protein insertion into mitochondrial inner membrane"/>
    <property type="evidence" value="ECO:0000250"/>
    <property type="project" value="UniProtKB"/>
</dbReference>
<dbReference type="GO" id="GO:0046512">
    <property type="term" value="P:sphingosine biosynthetic process"/>
    <property type="evidence" value="ECO:0000318"/>
    <property type="project" value="GO_Central"/>
</dbReference>
<dbReference type="CDD" id="cd01653">
    <property type="entry name" value="GATase1"/>
    <property type="match status" value="1"/>
</dbReference>
<dbReference type="FunFam" id="3.40.50.10330:FF:000015">
    <property type="entry name" value="acylglycerol kinase, mitochondrial"/>
    <property type="match status" value="1"/>
</dbReference>
<dbReference type="Gene3D" id="3.40.50.10330">
    <property type="entry name" value="Probable inorganic polyphosphate/atp-NAD kinase, domain 1"/>
    <property type="match status" value="1"/>
</dbReference>
<dbReference type="InterPro" id="IPR045579">
    <property type="entry name" value="AGK_C"/>
</dbReference>
<dbReference type="InterPro" id="IPR017438">
    <property type="entry name" value="ATP-NAD_kinase_N"/>
</dbReference>
<dbReference type="InterPro" id="IPR001206">
    <property type="entry name" value="Diacylglycerol_kinase_cat_dom"/>
</dbReference>
<dbReference type="InterPro" id="IPR050187">
    <property type="entry name" value="Lipid_Phosphate_FormReg"/>
</dbReference>
<dbReference type="InterPro" id="IPR016064">
    <property type="entry name" value="NAD/diacylglycerol_kinase_sf"/>
</dbReference>
<dbReference type="PANTHER" id="PTHR12358:SF31">
    <property type="entry name" value="ACYLGLYCEROL KINASE, MITOCHONDRIAL"/>
    <property type="match status" value="1"/>
</dbReference>
<dbReference type="PANTHER" id="PTHR12358">
    <property type="entry name" value="SPHINGOSINE KINASE"/>
    <property type="match status" value="1"/>
</dbReference>
<dbReference type="Pfam" id="PF19712">
    <property type="entry name" value="AGK_C"/>
    <property type="match status" value="1"/>
</dbReference>
<dbReference type="Pfam" id="PF00781">
    <property type="entry name" value="DAGK_cat"/>
    <property type="match status" value="1"/>
</dbReference>
<dbReference type="SMART" id="SM00046">
    <property type="entry name" value="DAGKc"/>
    <property type="match status" value="1"/>
</dbReference>
<dbReference type="SUPFAM" id="SSF111331">
    <property type="entry name" value="NAD kinase/diacylglycerol kinase-like"/>
    <property type="match status" value="1"/>
</dbReference>
<dbReference type="PROSITE" id="PS50146">
    <property type="entry name" value="DAGK"/>
    <property type="match status" value="1"/>
</dbReference>
<reference key="1">
    <citation type="submission" date="2003-01" db="EMBL/GenBank/DDBJ databases">
        <authorList>
            <consortium name="NIH - Xenopus Gene Collection (XGC) project"/>
        </authorList>
    </citation>
    <scope>NUCLEOTIDE SEQUENCE [LARGE SCALE MRNA]</scope>
    <source>
        <tissue>Embryo</tissue>
    </source>
</reference>
<keyword id="KW-0067">ATP-binding</keyword>
<keyword id="KW-0418">Kinase</keyword>
<keyword id="KW-0443">Lipid metabolism</keyword>
<keyword id="KW-0472">Membrane</keyword>
<keyword id="KW-0496">Mitochondrion</keyword>
<keyword id="KW-0999">Mitochondrion inner membrane</keyword>
<keyword id="KW-0547">Nucleotide-binding</keyword>
<keyword id="KW-1185">Reference proteome</keyword>
<keyword id="KW-0808">Transferase</keyword>
<feature type="chain" id="PRO_0000252384" description="Acylglycerol kinase, mitochondrial">
    <location>
        <begin position="1"/>
        <end position="428"/>
    </location>
</feature>
<feature type="domain" description="DAGKc" evidence="3">
    <location>
        <begin position="61"/>
        <end position="202"/>
    </location>
</feature>
<feature type="region of interest" description="Hydrophobic" evidence="1">
    <location>
        <begin position="18"/>
        <end position="34"/>
    </location>
</feature>
<gene>
    <name evidence="1" type="primary">agk</name>
    <name evidence="1" type="synonym">mulk</name>
</gene>
<accession>Q7ZYJ3</accession>